<dbReference type="EMBL" id="AY295929">
    <property type="protein sequence ID" value="AAP42568.2"/>
    <property type="molecule type" value="mRNA"/>
</dbReference>
<dbReference type="EMBL" id="JQ796280">
    <property type="protein sequence ID" value="AFN52415.1"/>
    <property type="molecule type" value="mRNA"/>
</dbReference>
<dbReference type="RefSeq" id="NP_001277897.1">
    <property type="nucleotide sequence ID" value="NM_001290968.1"/>
</dbReference>
<dbReference type="PDB" id="1TFV">
    <property type="method" value="X-ray"/>
    <property type="resolution" value="2.90 A"/>
    <property type="chains" value="A=22-381"/>
</dbReference>
<dbReference type="PDB" id="2O9O">
    <property type="method" value="X-ray"/>
    <property type="resolution" value="2.80 A"/>
    <property type="chains" value="A=22-381"/>
</dbReference>
<dbReference type="PDB" id="2QF8">
    <property type="method" value="X-ray"/>
    <property type="resolution" value="2.80 A"/>
    <property type="chains" value="A=22-381"/>
</dbReference>
<dbReference type="PDB" id="4MAV">
    <property type="method" value="X-ray"/>
    <property type="resolution" value="2.79 A"/>
    <property type="chains" value="A=22-381"/>
</dbReference>
<dbReference type="PDB" id="4ML4">
    <property type="method" value="X-ray"/>
    <property type="resolution" value="2.50 A"/>
    <property type="chains" value="A=22-381"/>
</dbReference>
<dbReference type="PDB" id="4MPK">
    <property type="method" value="X-ray"/>
    <property type="resolution" value="2.65 A"/>
    <property type="chains" value="A=22-381"/>
</dbReference>
<dbReference type="PDB" id="4MTV">
    <property type="method" value="X-ray"/>
    <property type="resolution" value="2.80 A"/>
    <property type="chains" value="A=22-381"/>
</dbReference>
<dbReference type="PDB" id="4NSB">
    <property type="method" value="X-ray"/>
    <property type="resolution" value="3.05 A"/>
    <property type="chains" value="A=22-381"/>
</dbReference>
<dbReference type="PDB" id="4Q7N">
    <property type="method" value="X-ray"/>
    <property type="resolution" value="1.79 A"/>
    <property type="chains" value="A=22-381"/>
</dbReference>
<dbReference type="PDB" id="5Z05">
    <property type="method" value="X-ray"/>
    <property type="resolution" value="1.49 A"/>
    <property type="chains" value="A=22-383"/>
</dbReference>
<dbReference type="PDB" id="5Z3S">
    <property type="method" value="X-ray"/>
    <property type="resolution" value="1.65 A"/>
    <property type="chains" value="A=22-383"/>
</dbReference>
<dbReference type="PDB" id="5Z4W">
    <property type="method" value="X-ray"/>
    <property type="resolution" value="1.79 A"/>
    <property type="chains" value="A=22-383"/>
</dbReference>
<dbReference type="PDBsum" id="1TFV"/>
<dbReference type="PDBsum" id="2O9O"/>
<dbReference type="PDBsum" id="2QF8"/>
<dbReference type="PDBsum" id="4MAV"/>
<dbReference type="PDBsum" id="4ML4"/>
<dbReference type="PDBsum" id="4MPK"/>
<dbReference type="PDBsum" id="4MTV"/>
<dbReference type="PDBsum" id="4NSB"/>
<dbReference type="PDBsum" id="4Q7N"/>
<dbReference type="PDBsum" id="5Z05"/>
<dbReference type="PDBsum" id="5Z3S"/>
<dbReference type="PDBsum" id="5Z4W"/>
<dbReference type="SMR" id="Q7YS85"/>
<dbReference type="CAZy" id="GH18">
    <property type="family name" value="Glycoside Hydrolase Family 18"/>
</dbReference>
<dbReference type="GlyCosmos" id="Q7YS85">
    <property type="glycosylation" value="1 site, No reported glycans"/>
</dbReference>
<dbReference type="iPTMnet" id="Q7YS85"/>
<dbReference type="GeneID" id="102399197"/>
<dbReference type="KEGG" id="bbub:102399197"/>
<dbReference type="CTD" id="1116"/>
<dbReference type="OrthoDB" id="76388at2759"/>
<dbReference type="EvolutionaryTrace" id="Q7YS85"/>
<dbReference type="GO" id="GO:0005737">
    <property type="term" value="C:cytoplasm"/>
    <property type="evidence" value="ECO:0000250"/>
    <property type="project" value="UniProtKB"/>
</dbReference>
<dbReference type="GO" id="GO:0005783">
    <property type="term" value="C:endoplasmic reticulum"/>
    <property type="evidence" value="ECO:0000250"/>
    <property type="project" value="UniProtKB"/>
</dbReference>
<dbReference type="GO" id="GO:0005615">
    <property type="term" value="C:extracellular space"/>
    <property type="evidence" value="ECO:0000250"/>
    <property type="project" value="UniProtKB"/>
</dbReference>
<dbReference type="GO" id="GO:0048471">
    <property type="term" value="C:perinuclear region of cytoplasm"/>
    <property type="evidence" value="ECO:0007669"/>
    <property type="project" value="UniProtKB-SubCell"/>
</dbReference>
<dbReference type="GO" id="GO:0030246">
    <property type="term" value="F:carbohydrate binding"/>
    <property type="evidence" value="ECO:0007669"/>
    <property type="project" value="UniProtKB-KW"/>
</dbReference>
<dbReference type="GO" id="GO:0008061">
    <property type="term" value="F:chitin binding"/>
    <property type="evidence" value="ECO:0000250"/>
    <property type="project" value="UniProtKB"/>
</dbReference>
<dbReference type="GO" id="GO:0007250">
    <property type="term" value="P:activation of NF-kappaB-inducing kinase activity"/>
    <property type="evidence" value="ECO:0000250"/>
    <property type="project" value="UniProtKB"/>
</dbReference>
<dbReference type="GO" id="GO:0006915">
    <property type="term" value="P:apoptotic process"/>
    <property type="evidence" value="ECO:0007669"/>
    <property type="project" value="UniProtKB-KW"/>
</dbReference>
<dbReference type="GO" id="GO:0005975">
    <property type="term" value="P:carbohydrate metabolic process"/>
    <property type="evidence" value="ECO:0007669"/>
    <property type="project" value="InterPro"/>
</dbReference>
<dbReference type="GO" id="GO:0071356">
    <property type="term" value="P:cellular response to tumor necrosis factor"/>
    <property type="evidence" value="ECO:0000250"/>
    <property type="project" value="UniProtKB"/>
</dbReference>
<dbReference type="GO" id="GO:0006032">
    <property type="term" value="P:chitin catabolic process"/>
    <property type="evidence" value="ECO:0007669"/>
    <property type="project" value="TreeGrafter"/>
</dbReference>
<dbReference type="GO" id="GO:0006954">
    <property type="term" value="P:inflammatory response"/>
    <property type="evidence" value="ECO:0000250"/>
    <property type="project" value="UniProtKB"/>
</dbReference>
<dbReference type="GO" id="GO:0030324">
    <property type="term" value="P:lung development"/>
    <property type="evidence" value="ECO:0000250"/>
    <property type="project" value="UniProtKB"/>
</dbReference>
<dbReference type="GO" id="GO:0045766">
    <property type="term" value="P:positive regulation of angiogenesis"/>
    <property type="evidence" value="ECO:0000250"/>
    <property type="project" value="UniProtKB"/>
</dbReference>
<dbReference type="GO" id="GO:0070374">
    <property type="term" value="P:positive regulation of ERK1 and ERK2 cascade"/>
    <property type="evidence" value="ECO:0000250"/>
    <property type="project" value="UniProtKB"/>
</dbReference>
<dbReference type="GO" id="GO:0032757">
    <property type="term" value="P:positive regulation of interleukin-8 production"/>
    <property type="evidence" value="ECO:0000250"/>
    <property type="project" value="UniProtKB"/>
</dbReference>
<dbReference type="GO" id="GO:0010800">
    <property type="term" value="P:positive regulation of peptidyl-threonine phosphorylation"/>
    <property type="evidence" value="ECO:0000250"/>
    <property type="project" value="UniProtKB"/>
</dbReference>
<dbReference type="GO" id="GO:0051897">
    <property type="term" value="P:positive regulation of phosphatidylinositol 3-kinase/protein kinase B signal transduction"/>
    <property type="evidence" value="ECO:0000250"/>
    <property type="project" value="UniProtKB"/>
</dbReference>
<dbReference type="GO" id="GO:0070555">
    <property type="term" value="P:response to interleukin-1"/>
    <property type="evidence" value="ECO:0000250"/>
    <property type="project" value="UniProtKB"/>
</dbReference>
<dbReference type="GO" id="GO:0070741">
    <property type="term" value="P:response to interleukin-6"/>
    <property type="evidence" value="ECO:0000250"/>
    <property type="project" value="UniProtKB"/>
</dbReference>
<dbReference type="GO" id="GO:0009612">
    <property type="term" value="P:response to mechanical stimulus"/>
    <property type="evidence" value="ECO:0000250"/>
    <property type="project" value="UniProtKB"/>
</dbReference>
<dbReference type="GO" id="GO:0034612">
    <property type="term" value="P:response to tumor necrosis factor"/>
    <property type="evidence" value="ECO:0000250"/>
    <property type="project" value="UniProtKB"/>
</dbReference>
<dbReference type="CDD" id="cd02872">
    <property type="entry name" value="GH18_chitolectin_chitotriosidase"/>
    <property type="match status" value="1"/>
</dbReference>
<dbReference type="FunFam" id="3.10.50.10:FF:000001">
    <property type="entry name" value="Chitinase 3-like 1"/>
    <property type="match status" value="1"/>
</dbReference>
<dbReference type="FunFam" id="3.20.20.80:FF:000047">
    <property type="entry name" value="Chitinase-3-like protein 1"/>
    <property type="match status" value="1"/>
</dbReference>
<dbReference type="Gene3D" id="3.10.50.10">
    <property type="match status" value="1"/>
</dbReference>
<dbReference type="Gene3D" id="3.20.20.80">
    <property type="entry name" value="Glycosidases"/>
    <property type="match status" value="1"/>
</dbReference>
<dbReference type="InterPro" id="IPR011583">
    <property type="entry name" value="Chitinase_II/V-like_cat"/>
</dbReference>
<dbReference type="InterPro" id="IPR029070">
    <property type="entry name" value="Chitinase_insertion_sf"/>
</dbReference>
<dbReference type="InterPro" id="IPR001223">
    <property type="entry name" value="Glyco_hydro18_cat"/>
</dbReference>
<dbReference type="InterPro" id="IPR017853">
    <property type="entry name" value="Glycoside_hydrolase_SF"/>
</dbReference>
<dbReference type="InterPro" id="IPR050314">
    <property type="entry name" value="Glycosyl_Hydrlase_18"/>
</dbReference>
<dbReference type="PANTHER" id="PTHR11177">
    <property type="entry name" value="CHITINASE"/>
    <property type="match status" value="1"/>
</dbReference>
<dbReference type="PANTHER" id="PTHR11177:SF202">
    <property type="entry name" value="CHITINASE-3-LIKE PROTEIN 1"/>
    <property type="match status" value="1"/>
</dbReference>
<dbReference type="Pfam" id="PF00704">
    <property type="entry name" value="Glyco_hydro_18"/>
    <property type="match status" value="1"/>
</dbReference>
<dbReference type="SMART" id="SM00636">
    <property type="entry name" value="Glyco_18"/>
    <property type="match status" value="1"/>
</dbReference>
<dbReference type="SUPFAM" id="SSF51445">
    <property type="entry name" value="(Trans)glycosidases"/>
    <property type="match status" value="1"/>
</dbReference>
<dbReference type="SUPFAM" id="SSF54556">
    <property type="entry name" value="Chitinase insertion domain"/>
    <property type="match status" value="1"/>
</dbReference>
<dbReference type="PROSITE" id="PS51910">
    <property type="entry name" value="GH18_2"/>
    <property type="match status" value="1"/>
</dbReference>
<gene>
    <name type="primary">CHI3L1</name>
    <name type="synonym">MGP-40</name>
</gene>
<accession>Q7YS85</accession>
<accession>I6YIV5</accession>
<comment type="function">
    <text evidence="1">Carbohydrate-binding lectin with a preference for chitin. Has no chitinase activity. May play a role in tissue remodeling and in the capacity of cells to respond to and cope with changes in their environment. Plays a role in T-helper cell type 2 (Th2) inflammatory response and IL-13-induced inflammation, regulating allergen sensitization, inflammatory cell apoptosis, dendritic cell accumulation and M2 macrophage differentiation. Facilitates invasion of pathogenic enteric bacteria into colonic mucosa and lymphoid organs. Mediates activation of AKT1 signaling pathway and subsequent IL8 production in colonic epithelial cells. Regulates antibacterial responses in lung by contributing to macrophage bacterial killing, controlling bacterial dissemination and augmenting host tolerance. Also regulates hyperoxia-induced injury, inflammation and epithelial apoptosis in lung (By similarity).</text>
</comment>
<comment type="subunit">
    <text>Monomer.</text>
</comment>
<comment type="subcellular location">
    <subcellularLocation>
        <location>Secreted</location>
        <location>Extracellular space</location>
    </subcellularLocation>
    <subcellularLocation>
        <location evidence="1">Cytoplasm</location>
    </subcellularLocation>
    <subcellularLocation>
        <location evidence="1">Cytoplasm</location>
        <location evidence="1">Perinuclear region</location>
    </subcellularLocation>
    <subcellularLocation>
        <location evidence="1">Endoplasmic reticulum</location>
    </subcellularLocation>
</comment>
<comment type="tissue specificity">
    <text>Detected in mammary gland.</text>
</comment>
<comment type="similarity">
    <text evidence="4">Belongs to the glycosyl hydrolase 18 family.</text>
</comment>
<comment type="caution">
    <text evidence="4">Although it belongs to the glycosyl hydrolase 18 family, Leu-140 is present instead of the conserved Glu which is an active site residue. Therefore this protein lacks chitinase activity.</text>
</comment>
<name>CH3L1_BUBBU</name>
<sequence length="383" mass="42935">MGLRVAQTGFVVLVLLQSCAAYKLICYYTSWSQYREGDGSCFPDAIDPFLCTHVIYSFANISNNEIDTWEWNDVTLYDTLNTLKNRNPKLKTLLSVGGWNFGSQRFSKIASKTQSRRTFIKSVPPFLRTHGFDGLDLAWLYPGWRDKRHLTTLVKEMKAEFVREAQAGTEQLLLSAAVPAGKIAIDRGYDIAQISRHLDFISLLTYDFHGAWRQTVGHHSPLFRGQEDASSDRFSNADYAVSYMLRLGAPANKLVMGIPTFGKSYTLASSKTDVGAPISGPGIPGQFTKEKGILAYYEICDFLHGATTHRFRDQQVPYATKGNQWVAYDDQESVKNKARYLKNRQLAGAMVWALDLDDFRGTFCGQNLAFPLTNAIKDVLAGV</sequence>
<evidence type="ECO:0000250" key="1"/>
<evidence type="ECO:0000255" key="2">
    <source>
        <dbReference type="PROSITE-ProRule" id="PRU01258"/>
    </source>
</evidence>
<evidence type="ECO:0000269" key="3">
    <source>
    </source>
</evidence>
<evidence type="ECO:0000305" key="4"/>
<evidence type="ECO:0007829" key="5">
    <source>
        <dbReference type="PDB" id="2O9O"/>
    </source>
</evidence>
<evidence type="ECO:0007829" key="6">
    <source>
        <dbReference type="PDB" id="4MAV"/>
    </source>
</evidence>
<evidence type="ECO:0007829" key="7">
    <source>
        <dbReference type="PDB" id="4MPK"/>
    </source>
</evidence>
<evidence type="ECO:0007829" key="8">
    <source>
        <dbReference type="PDB" id="4Q7N"/>
    </source>
</evidence>
<evidence type="ECO:0007829" key="9">
    <source>
        <dbReference type="PDB" id="5Z05"/>
    </source>
</evidence>
<evidence type="ECO:0007829" key="10">
    <source>
        <dbReference type="PDB" id="5Z4W"/>
    </source>
</evidence>
<protein>
    <recommendedName>
        <fullName>Chitinase-3-like protein 1</fullName>
    </recommendedName>
    <alternativeName>
        <fullName>Mammary gland protein 40</fullName>
    </alternativeName>
    <alternativeName>
        <fullName>SPB-40</fullName>
    </alternativeName>
</protein>
<keyword id="KW-0002">3D-structure</keyword>
<keyword id="KW-0929">Antimicrobial</keyword>
<keyword id="KW-0053">Apoptosis</keyword>
<keyword id="KW-0963">Cytoplasm</keyword>
<keyword id="KW-1015">Disulfide bond</keyword>
<keyword id="KW-0256">Endoplasmic reticulum</keyword>
<keyword id="KW-0325">Glycoprotein</keyword>
<keyword id="KW-0395">Inflammatory response</keyword>
<keyword id="KW-0430">Lectin</keyword>
<keyword id="KW-0964">Secreted</keyword>
<keyword id="KW-0732">Signal</keyword>
<feature type="signal peptide">
    <location>
        <begin position="1"/>
        <end position="21"/>
    </location>
</feature>
<feature type="chain" id="PRO_0000077054" description="Chitinase-3-like protein 1">
    <location>
        <begin position="22"/>
        <end position="383"/>
    </location>
</feature>
<feature type="domain" description="GH18" evidence="2">
    <location>
        <begin position="22"/>
        <end position="383"/>
    </location>
</feature>
<feature type="region of interest" description="Important for AKT1 activation and IL8 production" evidence="1">
    <location>
        <begin position="324"/>
        <end position="338"/>
    </location>
</feature>
<feature type="binding site" evidence="2">
    <location>
        <begin position="70"/>
        <end position="71"/>
    </location>
    <ligand>
        <name>chitin</name>
        <dbReference type="ChEBI" id="CHEBI:17029"/>
    </ligand>
</feature>
<feature type="binding site" evidence="2">
    <location>
        <begin position="97"/>
        <end position="100"/>
    </location>
    <ligand>
        <name>chitin</name>
        <dbReference type="ChEBI" id="CHEBI:17029"/>
    </ligand>
</feature>
<feature type="binding site" evidence="2">
    <location>
        <position position="141"/>
    </location>
    <ligand>
        <name>chitin</name>
        <dbReference type="ChEBI" id="CHEBI:17029"/>
    </ligand>
</feature>
<feature type="binding site" evidence="2">
    <location>
        <begin position="204"/>
        <end position="207"/>
    </location>
    <ligand>
        <name>chitin</name>
        <dbReference type="ChEBI" id="CHEBI:17029"/>
    </ligand>
</feature>
<feature type="binding site" evidence="1">
    <location>
        <position position="263"/>
    </location>
    <ligand>
        <name>chitin</name>
        <dbReference type="ChEBI" id="CHEBI:17029"/>
    </ligand>
</feature>
<feature type="binding site" evidence="2">
    <location>
        <position position="352"/>
    </location>
    <ligand>
        <name>chitin</name>
        <dbReference type="ChEBI" id="CHEBI:17029"/>
    </ligand>
</feature>
<feature type="glycosylation site" description="N-linked (GlcNAc...) asparagine" evidence="3">
    <location>
        <position position="60"/>
    </location>
</feature>
<feature type="disulfide bond" evidence="2 3">
    <location>
        <begin position="26"/>
        <end position="51"/>
    </location>
</feature>
<feature type="disulfide bond" evidence="3">
    <location>
        <begin position="300"/>
        <end position="364"/>
    </location>
</feature>
<feature type="sequence conflict" description="In Ref. 1; AAP42568." evidence="4" ref="1">
    <original>K</original>
    <variation>N</variation>
    <location>
        <position position="89"/>
    </location>
</feature>
<feature type="sequence conflict" description="In Ref. 1; AAP42568." evidence="4" ref="1">
    <original>F</original>
    <variation>Y</variation>
    <location>
        <position position="101"/>
    </location>
</feature>
<feature type="sequence conflict" description="In Ref. 1; AAP42568." evidence="4" ref="1">
    <original>Y</original>
    <variation>W</variation>
    <location>
        <position position="141"/>
    </location>
</feature>
<feature type="sequence conflict" description="In Ref. 1; AAP42568." evidence="4" ref="1">
    <original>P</original>
    <variation>T</variation>
    <location>
        <position position="179"/>
    </location>
</feature>
<feature type="sequence conflict" description="In Ref. 1; AAP42568." evidence="4" ref="1">
    <original>Q</original>
    <variation>N</variation>
    <location>
        <position position="226"/>
    </location>
</feature>
<feature type="sequence conflict" description="In Ref. 1; AAP42568." evidence="4" ref="1">
    <location>
        <position position="232"/>
    </location>
</feature>
<feature type="sequence conflict" description="In Ref. 1; AAP42568." evidence="4" ref="1">
    <original>K</original>
    <variation>R</variation>
    <location>
        <position position="263"/>
    </location>
</feature>
<feature type="sequence conflict" description="In Ref. 1; AAP42568." evidence="4" ref="1">
    <original>Q</original>
    <variation>R</variation>
    <location>
        <position position="286"/>
    </location>
</feature>
<feature type="sequence conflict" description="In Ref. 1; AAP42568." evidence="4" ref="1">
    <original>E</original>
    <variation>W</variation>
    <location>
        <position position="290"/>
    </location>
</feature>
<feature type="sequence conflict" description="In Ref. 1; AAP42568." evidence="4" ref="1">
    <original>A</original>
    <variation>T</variation>
    <location>
        <position position="369"/>
    </location>
</feature>
<feature type="sequence conflict" description="In Ref. 1; AAP42568." evidence="4" ref="1">
    <original>N</original>
    <variation>S</variation>
    <location>
        <position position="374"/>
    </location>
</feature>
<feature type="sequence conflict" description="In Ref. 1; AAP42568." evidence="4" ref="1">
    <original>G</original>
    <variation>R</variation>
    <location>
        <position position="382"/>
    </location>
</feature>
<feature type="strand" evidence="9">
    <location>
        <begin position="23"/>
        <end position="29"/>
    </location>
</feature>
<feature type="helix" evidence="9">
    <location>
        <begin position="30"/>
        <end position="34"/>
    </location>
</feature>
<feature type="helix" evidence="9">
    <location>
        <begin position="37"/>
        <end position="39"/>
    </location>
</feature>
<feature type="helix" evidence="9">
    <location>
        <begin position="43"/>
        <end position="45"/>
    </location>
</feature>
<feature type="turn" evidence="9">
    <location>
        <begin position="48"/>
        <end position="50"/>
    </location>
</feature>
<feature type="strand" evidence="9">
    <location>
        <begin position="52"/>
        <end position="62"/>
    </location>
</feature>
<feature type="strand" evidence="9">
    <location>
        <begin position="65"/>
        <end position="67"/>
    </location>
</feature>
<feature type="strand" evidence="5">
    <location>
        <begin position="70"/>
        <end position="72"/>
    </location>
</feature>
<feature type="helix" evidence="9">
    <location>
        <begin position="73"/>
        <end position="82"/>
    </location>
</feature>
<feature type="helix" evidence="9">
    <location>
        <begin position="83"/>
        <end position="85"/>
    </location>
</feature>
<feature type="strand" evidence="9">
    <location>
        <begin position="91"/>
        <end position="97"/>
    </location>
</feature>
<feature type="strand" evidence="8">
    <location>
        <begin position="99"/>
        <end position="101"/>
    </location>
</feature>
<feature type="helix" evidence="9">
    <location>
        <begin position="103"/>
        <end position="110"/>
    </location>
</feature>
<feature type="helix" evidence="9">
    <location>
        <begin position="113"/>
        <end position="130"/>
    </location>
</feature>
<feature type="strand" evidence="9">
    <location>
        <begin position="133"/>
        <end position="138"/>
    </location>
</feature>
<feature type="helix" evidence="9">
    <location>
        <begin position="144"/>
        <end position="146"/>
    </location>
</feature>
<feature type="helix" evidence="9">
    <location>
        <begin position="147"/>
        <end position="165"/>
    </location>
</feature>
<feature type="strand" evidence="9">
    <location>
        <begin position="173"/>
        <end position="179"/>
    </location>
</feature>
<feature type="helix" evidence="9">
    <location>
        <begin position="182"/>
        <end position="188"/>
    </location>
</feature>
<feature type="helix" evidence="9">
    <location>
        <begin position="191"/>
        <end position="197"/>
    </location>
</feature>
<feature type="strand" evidence="9">
    <location>
        <begin position="199"/>
        <end position="204"/>
    </location>
</feature>
<feature type="strand" evidence="9">
    <location>
        <begin position="213"/>
        <end position="215"/>
    </location>
</feature>
<feature type="turn" evidence="10">
    <location>
        <begin position="226"/>
        <end position="229"/>
    </location>
</feature>
<feature type="strand" evidence="6">
    <location>
        <begin position="233"/>
        <end position="236"/>
    </location>
</feature>
<feature type="helix" evidence="9">
    <location>
        <begin position="237"/>
        <end position="246"/>
    </location>
</feature>
<feature type="helix" evidence="9">
    <location>
        <begin position="251"/>
        <end position="253"/>
    </location>
</feature>
<feature type="strand" evidence="9">
    <location>
        <begin position="254"/>
        <end position="270"/>
    </location>
</feature>
<feature type="strand" evidence="9">
    <location>
        <begin position="277"/>
        <end position="281"/>
    </location>
</feature>
<feature type="turn" evidence="9">
    <location>
        <begin position="286"/>
        <end position="288"/>
    </location>
</feature>
<feature type="strand" evidence="7">
    <location>
        <begin position="293"/>
        <end position="295"/>
    </location>
</feature>
<feature type="helix" evidence="9">
    <location>
        <begin position="296"/>
        <end position="302"/>
    </location>
</feature>
<feature type="turn" evidence="9">
    <location>
        <begin position="303"/>
        <end position="305"/>
    </location>
</feature>
<feature type="strand" evidence="9">
    <location>
        <begin position="307"/>
        <end position="311"/>
    </location>
</feature>
<feature type="turn" evidence="9">
    <location>
        <begin position="312"/>
        <end position="315"/>
    </location>
</feature>
<feature type="strand" evidence="9">
    <location>
        <begin position="316"/>
        <end position="321"/>
    </location>
</feature>
<feature type="strand" evidence="9">
    <location>
        <begin position="324"/>
        <end position="327"/>
    </location>
</feature>
<feature type="helix" evidence="9">
    <location>
        <begin position="331"/>
        <end position="343"/>
    </location>
</feature>
<feature type="strand" evidence="9">
    <location>
        <begin position="347"/>
        <end position="352"/>
    </location>
</feature>
<feature type="helix" evidence="9">
    <location>
        <begin position="354"/>
        <end position="356"/>
    </location>
</feature>
<feature type="strand" evidence="9">
    <location>
        <begin position="359"/>
        <end position="361"/>
    </location>
</feature>
<feature type="strand" evidence="9">
    <location>
        <begin position="363"/>
        <end position="366"/>
    </location>
</feature>
<feature type="helix" evidence="9">
    <location>
        <begin position="371"/>
        <end position="380"/>
    </location>
</feature>
<reference key="1">
    <citation type="submission" date="2004-04" db="EMBL/GenBank/DDBJ databases">
        <title>Buffalo mammary gland protein.</title>
        <authorList>
            <person name="Bilgrami S."/>
            <person name="Saravanan K."/>
            <person name="Yadav S."/>
            <person name="Kaur P."/>
            <person name="Srinivasan A."/>
            <person name="Singh T.P."/>
        </authorList>
    </citation>
    <scope>NUCLEOTIDE SEQUENCE [MRNA]</scope>
    <source>
        <tissue>Mammary gland</tissue>
    </source>
</reference>
<reference key="2">
    <citation type="submission" date="2012-03" db="EMBL/GenBank/DDBJ databases">
        <authorList>
            <person name="Singh S."/>
            <person name="Anand V."/>
            <person name="Jena M.K."/>
            <person name="Jamwal M."/>
            <person name="Kumar S."/>
            <person name="Dang A.K."/>
            <person name="Malakar D."/>
            <person name="Mohanty T.K."/>
            <person name="Kaushik J.K."/>
            <person name="Mohanty A.K."/>
        </authorList>
    </citation>
    <scope>NUCLEOTIDE SEQUENCE [MRNA]</scope>
    <source>
        <tissue>Mammary gland</tissue>
    </source>
</reference>
<reference key="3">
    <citation type="journal article" date="2007" name="Acta Crystallogr. F">
        <title>Structure of the buffalo secretory signalling glycoprotein at 2.8 A resolution.</title>
        <authorList>
            <person name="Ethayathulla A.S."/>
            <person name="Srivastava D.B."/>
            <person name="Kumar J."/>
            <person name="Saravanan K."/>
            <person name="Bilgrami S."/>
            <person name="Sharma S."/>
            <person name="Kaur P."/>
            <person name="Srinivasan A."/>
            <person name="Singh T.P."/>
        </authorList>
    </citation>
    <scope>X-RAY CRYSTALLOGRAPHY (2.9 ANGSTROMS) OF 22-383</scope>
    <scope>GLYCOSYLATION AT ASN-60</scope>
    <scope>DISULFIDE BONDS</scope>
</reference>
<organism>
    <name type="scientific">Bubalus bubalis</name>
    <name type="common">Domestic water buffalo</name>
    <dbReference type="NCBI Taxonomy" id="89462"/>
    <lineage>
        <taxon>Eukaryota</taxon>
        <taxon>Metazoa</taxon>
        <taxon>Chordata</taxon>
        <taxon>Craniata</taxon>
        <taxon>Vertebrata</taxon>
        <taxon>Euteleostomi</taxon>
        <taxon>Mammalia</taxon>
        <taxon>Eutheria</taxon>
        <taxon>Laurasiatheria</taxon>
        <taxon>Artiodactyla</taxon>
        <taxon>Ruminantia</taxon>
        <taxon>Pecora</taxon>
        <taxon>Bovidae</taxon>
        <taxon>Bovinae</taxon>
        <taxon>Bubalus</taxon>
    </lineage>
</organism>
<proteinExistence type="evidence at protein level"/>